<keyword id="KW-1185">Reference proteome</keyword>
<evidence type="ECO:0000255" key="1">
    <source>
        <dbReference type="HAMAP-Rule" id="MF_01187"/>
    </source>
</evidence>
<organism>
    <name type="scientific">Methylococcus capsulatus (strain ATCC 33009 / NCIMB 11132 / Bath)</name>
    <dbReference type="NCBI Taxonomy" id="243233"/>
    <lineage>
        <taxon>Bacteria</taxon>
        <taxon>Pseudomonadati</taxon>
        <taxon>Pseudomonadota</taxon>
        <taxon>Gammaproteobacteria</taxon>
        <taxon>Methylococcales</taxon>
        <taxon>Methylococcaceae</taxon>
        <taxon>Methylococcus</taxon>
    </lineage>
</organism>
<reference key="1">
    <citation type="journal article" date="2004" name="PLoS Biol.">
        <title>Genomic insights into methanotrophy: the complete genome sequence of Methylococcus capsulatus (Bath).</title>
        <authorList>
            <person name="Ward N.L."/>
            <person name="Larsen O."/>
            <person name="Sakwa J."/>
            <person name="Bruseth L."/>
            <person name="Khouri H.M."/>
            <person name="Durkin A.S."/>
            <person name="Dimitrov G."/>
            <person name="Jiang L."/>
            <person name="Scanlan D."/>
            <person name="Kang K.H."/>
            <person name="Lewis M.R."/>
            <person name="Nelson K.E."/>
            <person name="Methe B.A."/>
            <person name="Wu M."/>
            <person name="Heidelberg J.F."/>
            <person name="Paulsen I.T."/>
            <person name="Fouts D.E."/>
            <person name="Ravel J."/>
            <person name="Tettelin H."/>
            <person name="Ren Q."/>
            <person name="Read T.D."/>
            <person name="DeBoy R.T."/>
            <person name="Seshadri R."/>
            <person name="Salzberg S.L."/>
            <person name="Jensen H.B."/>
            <person name="Birkeland N.K."/>
            <person name="Nelson W.C."/>
            <person name="Dodson R.J."/>
            <person name="Grindhaug S.H."/>
            <person name="Holt I.E."/>
            <person name="Eidhammer I."/>
            <person name="Jonasen I."/>
            <person name="Vanaken S."/>
            <person name="Utterback T.R."/>
            <person name="Feldblyum T.V."/>
            <person name="Fraser C.M."/>
            <person name="Lillehaug J.R."/>
            <person name="Eisen J.A."/>
        </authorList>
    </citation>
    <scope>NUCLEOTIDE SEQUENCE [LARGE SCALE GENOMIC DNA]</scope>
    <source>
        <strain>ATCC 33009 / NCIMB 11132 / Bath</strain>
    </source>
</reference>
<protein>
    <recommendedName>
        <fullName evidence="1">UPF0434 protein MCA0634</fullName>
    </recommendedName>
</protein>
<dbReference type="EMBL" id="AE017282">
    <property type="protein sequence ID" value="AAU93070.1"/>
    <property type="molecule type" value="Genomic_DNA"/>
</dbReference>
<dbReference type="RefSeq" id="WP_010959978.1">
    <property type="nucleotide sequence ID" value="NC_002977.6"/>
</dbReference>
<dbReference type="SMR" id="Q60B48"/>
<dbReference type="STRING" id="243233.MCA0634"/>
<dbReference type="GeneID" id="88222963"/>
<dbReference type="KEGG" id="mca:MCA0634"/>
<dbReference type="eggNOG" id="COG2835">
    <property type="taxonomic scope" value="Bacteria"/>
</dbReference>
<dbReference type="HOGENOM" id="CLU_155659_3_1_6"/>
<dbReference type="Proteomes" id="UP000006821">
    <property type="component" value="Chromosome"/>
</dbReference>
<dbReference type="GO" id="GO:0005829">
    <property type="term" value="C:cytosol"/>
    <property type="evidence" value="ECO:0007669"/>
    <property type="project" value="TreeGrafter"/>
</dbReference>
<dbReference type="FunFam" id="2.20.25.10:FF:000002">
    <property type="entry name" value="UPF0434 protein YcaR"/>
    <property type="match status" value="1"/>
</dbReference>
<dbReference type="Gene3D" id="2.20.25.10">
    <property type="match status" value="1"/>
</dbReference>
<dbReference type="HAMAP" id="MF_01187">
    <property type="entry name" value="UPF0434"/>
    <property type="match status" value="1"/>
</dbReference>
<dbReference type="InterPro" id="IPR005651">
    <property type="entry name" value="Trm112-like"/>
</dbReference>
<dbReference type="PANTHER" id="PTHR33505:SF4">
    <property type="entry name" value="PROTEIN PREY, MITOCHONDRIAL"/>
    <property type="match status" value="1"/>
</dbReference>
<dbReference type="PANTHER" id="PTHR33505">
    <property type="entry name" value="ZGC:162634"/>
    <property type="match status" value="1"/>
</dbReference>
<dbReference type="Pfam" id="PF03966">
    <property type="entry name" value="Trm112p"/>
    <property type="match status" value="1"/>
</dbReference>
<dbReference type="SUPFAM" id="SSF158997">
    <property type="entry name" value="Trm112p-like"/>
    <property type="match status" value="1"/>
</dbReference>
<accession>Q60B48</accession>
<gene>
    <name type="ordered locus">MCA0634</name>
</gene>
<proteinExistence type="inferred from homology"/>
<sequence>MDKRLLEILVCPVCKGGLIYLREQQELVCLADKLAYPIRDDIPVMLDSEARRLSLEEYDALRQRRAAPVA</sequence>
<name>Y634_METCA</name>
<feature type="chain" id="PRO_0000291114" description="UPF0434 protein MCA0634">
    <location>
        <begin position="1"/>
        <end position="70"/>
    </location>
</feature>
<comment type="similarity">
    <text evidence="1">Belongs to the UPF0434 family.</text>
</comment>